<evidence type="ECO:0000255" key="1">
    <source>
        <dbReference type="HAMAP-Rule" id="MF_00156"/>
    </source>
</evidence>
<evidence type="ECO:0000305" key="2"/>
<accession>Q66EG3</accession>
<proteinExistence type="inferred from homology"/>
<keyword id="KW-0963">Cytoplasm</keyword>
<keyword id="KW-0460">Magnesium</keyword>
<keyword id="KW-0479">Metal-binding</keyword>
<keyword id="KW-0566">Pantothenate biosynthesis</keyword>
<keyword id="KW-0808">Transferase</keyword>
<reference key="1">
    <citation type="journal article" date="2004" name="Proc. Natl. Acad. Sci. U.S.A.">
        <title>Insights into the evolution of Yersinia pestis through whole-genome comparison with Yersinia pseudotuberculosis.</title>
        <authorList>
            <person name="Chain P.S.G."/>
            <person name="Carniel E."/>
            <person name="Larimer F.W."/>
            <person name="Lamerdin J."/>
            <person name="Stoutland P.O."/>
            <person name="Regala W.M."/>
            <person name="Georgescu A.M."/>
            <person name="Vergez L.M."/>
            <person name="Land M.L."/>
            <person name="Motin V.L."/>
            <person name="Brubaker R.R."/>
            <person name="Fowler J."/>
            <person name="Hinnebusch J."/>
            <person name="Marceau M."/>
            <person name="Medigue C."/>
            <person name="Simonet M."/>
            <person name="Chenal-Francisque V."/>
            <person name="Souza B."/>
            <person name="Dacheux D."/>
            <person name="Elliott J.M."/>
            <person name="Derbise A."/>
            <person name="Hauser L.J."/>
            <person name="Garcia E."/>
        </authorList>
    </citation>
    <scope>NUCLEOTIDE SEQUENCE [LARGE SCALE GENOMIC DNA]</scope>
    <source>
        <strain>IP32953</strain>
    </source>
</reference>
<gene>
    <name evidence="1" type="primary">panB</name>
    <name type="ordered locus">YPTB0730</name>
</gene>
<feature type="chain" id="PRO_0000184914" description="3-methyl-2-oxobutanoate hydroxymethyltransferase">
    <location>
        <begin position="1"/>
        <end position="265"/>
    </location>
</feature>
<feature type="active site" description="Proton acceptor" evidence="1">
    <location>
        <position position="181"/>
    </location>
</feature>
<feature type="binding site" evidence="1">
    <location>
        <begin position="45"/>
        <end position="46"/>
    </location>
    <ligand>
        <name>3-methyl-2-oxobutanoate</name>
        <dbReference type="ChEBI" id="CHEBI:11851"/>
    </ligand>
</feature>
<feature type="binding site" evidence="1">
    <location>
        <position position="45"/>
    </location>
    <ligand>
        <name>Mg(2+)</name>
        <dbReference type="ChEBI" id="CHEBI:18420"/>
    </ligand>
</feature>
<feature type="binding site" evidence="1">
    <location>
        <position position="84"/>
    </location>
    <ligand>
        <name>3-methyl-2-oxobutanoate</name>
        <dbReference type="ChEBI" id="CHEBI:11851"/>
    </ligand>
</feature>
<feature type="binding site" evidence="1">
    <location>
        <position position="84"/>
    </location>
    <ligand>
        <name>Mg(2+)</name>
        <dbReference type="ChEBI" id="CHEBI:18420"/>
    </ligand>
</feature>
<feature type="binding site" evidence="1">
    <location>
        <position position="112"/>
    </location>
    <ligand>
        <name>3-methyl-2-oxobutanoate</name>
        <dbReference type="ChEBI" id="CHEBI:11851"/>
    </ligand>
</feature>
<feature type="binding site" evidence="1">
    <location>
        <position position="114"/>
    </location>
    <ligand>
        <name>Mg(2+)</name>
        <dbReference type="ChEBI" id="CHEBI:18420"/>
    </ligand>
</feature>
<dbReference type="EC" id="2.1.2.11" evidence="1"/>
<dbReference type="EMBL" id="BX936398">
    <property type="protein sequence ID" value="CAH19970.1"/>
    <property type="status" value="ALT_INIT"/>
    <property type="molecule type" value="Genomic_DNA"/>
</dbReference>
<dbReference type="RefSeq" id="WP_012304571.1">
    <property type="nucleotide sequence ID" value="NC_006155.1"/>
</dbReference>
<dbReference type="SMR" id="Q66EG3"/>
<dbReference type="GeneID" id="49787265"/>
<dbReference type="KEGG" id="ypo:BZ17_1825"/>
<dbReference type="KEGG" id="yps:YPTB0730"/>
<dbReference type="PATRIC" id="fig|273123.14.peg.1935"/>
<dbReference type="UniPathway" id="UPA00028">
    <property type="reaction ID" value="UER00003"/>
</dbReference>
<dbReference type="Proteomes" id="UP000001011">
    <property type="component" value="Chromosome"/>
</dbReference>
<dbReference type="GO" id="GO:0005737">
    <property type="term" value="C:cytoplasm"/>
    <property type="evidence" value="ECO:0007669"/>
    <property type="project" value="UniProtKB-SubCell"/>
</dbReference>
<dbReference type="GO" id="GO:0003864">
    <property type="term" value="F:3-methyl-2-oxobutanoate hydroxymethyltransferase activity"/>
    <property type="evidence" value="ECO:0007669"/>
    <property type="project" value="UniProtKB-UniRule"/>
</dbReference>
<dbReference type="GO" id="GO:0000287">
    <property type="term" value="F:magnesium ion binding"/>
    <property type="evidence" value="ECO:0007669"/>
    <property type="project" value="TreeGrafter"/>
</dbReference>
<dbReference type="GO" id="GO:0015940">
    <property type="term" value="P:pantothenate biosynthetic process"/>
    <property type="evidence" value="ECO:0007669"/>
    <property type="project" value="UniProtKB-UniRule"/>
</dbReference>
<dbReference type="CDD" id="cd06557">
    <property type="entry name" value="KPHMT-like"/>
    <property type="match status" value="1"/>
</dbReference>
<dbReference type="FunFam" id="3.20.20.60:FF:000003">
    <property type="entry name" value="3-methyl-2-oxobutanoate hydroxymethyltransferase"/>
    <property type="match status" value="1"/>
</dbReference>
<dbReference type="Gene3D" id="3.20.20.60">
    <property type="entry name" value="Phosphoenolpyruvate-binding domains"/>
    <property type="match status" value="1"/>
</dbReference>
<dbReference type="HAMAP" id="MF_00156">
    <property type="entry name" value="PanB"/>
    <property type="match status" value="1"/>
</dbReference>
<dbReference type="InterPro" id="IPR003700">
    <property type="entry name" value="Pantoate_hydroxy_MeTrfase"/>
</dbReference>
<dbReference type="InterPro" id="IPR015813">
    <property type="entry name" value="Pyrv/PenolPyrv_kinase-like_dom"/>
</dbReference>
<dbReference type="InterPro" id="IPR040442">
    <property type="entry name" value="Pyrv_kinase-like_dom_sf"/>
</dbReference>
<dbReference type="NCBIfam" id="TIGR00222">
    <property type="entry name" value="panB"/>
    <property type="match status" value="1"/>
</dbReference>
<dbReference type="NCBIfam" id="NF001452">
    <property type="entry name" value="PRK00311.1"/>
    <property type="match status" value="1"/>
</dbReference>
<dbReference type="PANTHER" id="PTHR20881">
    <property type="entry name" value="3-METHYL-2-OXOBUTANOATE HYDROXYMETHYLTRANSFERASE"/>
    <property type="match status" value="1"/>
</dbReference>
<dbReference type="PANTHER" id="PTHR20881:SF0">
    <property type="entry name" value="3-METHYL-2-OXOBUTANOATE HYDROXYMETHYLTRANSFERASE"/>
    <property type="match status" value="1"/>
</dbReference>
<dbReference type="Pfam" id="PF02548">
    <property type="entry name" value="Pantoate_transf"/>
    <property type="match status" value="1"/>
</dbReference>
<dbReference type="PIRSF" id="PIRSF000388">
    <property type="entry name" value="Pantoate_hydroxy_MeTrfase"/>
    <property type="match status" value="1"/>
</dbReference>
<dbReference type="SUPFAM" id="SSF51621">
    <property type="entry name" value="Phosphoenolpyruvate/pyruvate domain"/>
    <property type="match status" value="1"/>
</dbReference>
<comment type="function">
    <text evidence="1">Catalyzes the reversible reaction in which hydroxymethyl group from 5,10-methylenetetrahydrofolate is transferred onto alpha-ketoisovalerate to form ketopantoate.</text>
</comment>
<comment type="catalytic activity">
    <reaction evidence="1">
        <text>3-methyl-2-oxobutanoate + (6R)-5,10-methylene-5,6,7,8-tetrahydrofolate + H2O = 2-dehydropantoate + (6S)-5,6,7,8-tetrahydrofolate</text>
        <dbReference type="Rhea" id="RHEA:11824"/>
        <dbReference type="ChEBI" id="CHEBI:11561"/>
        <dbReference type="ChEBI" id="CHEBI:11851"/>
        <dbReference type="ChEBI" id="CHEBI:15377"/>
        <dbReference type="ChEBI" id="CHEBI:15636"/>
        <dbReference type="ChEBI" id="CHEBI:57453"/>
        <dbReference type="EC" id="2.1.2.11"/>
    </reaction>
</comment>
<comment type="cofactor">
    <cofactor evidence="1">
        <name>Mg(2+)</name>
        <dbReference type="ChEBI" id="CHEBI:18420"/>
    </cofactor>
    <text evidence="1">Binds 1 Mg(2+) ion per subunit.</text>
</comment>
<comment type="pathway">
    <text evidence="1">Cofactor biosynthesis; (R)-pantothenate biosynthesis; (R)-pantoate from 3-methyl-2-oxobutanoate: step 1/2.</text>
</comment>
<comment type="subunit">
    <text evidence="1">Homodecamer; pentamer of dimers.</text>
</comment>
<comment type="subcellular location">
    <subcellularLocation>
        <location evidence="1">Cytoplasm</location>
    </subcellularLocation>
</comment>
<comment type="similarity">
    <text evidence="1">Belongs to the PanB family.</text>
</comment>
<comment type="sequence caution" evidence="2">
    <conflict type="erroneous initiation">
        <sequence resource="EMBL-CDS" id="CAH19970"/>
    </conflict>
</comment>
<organism>
    <name type="scientific">Yersinia pseudotuberculosis serotype I (strain IP32953)</name>
    <dbReference type="NCBI Taxonomy" id="273123"/>
    <lineage>
        <taxon>Bacteria</taxon>
        <taxon>Pseudomonadati</taxon>
        <taxon>Pseudomonadota</taxon>
        <taxon>Gammaproteobacteria</taxon>
        <taxon>Enterobacterales</taxon>
        <taxon>Yersiniaceae</taxon>
        <taxon>Yersinia</taxon>
    </lineage>
</organism>
<name>PANB_YERPS</name>
<protein>
    <recommendedName>
        <fullName evidence="1">3-methyl-2-oxobutanoate hydroxymethyltransferase</fullName>
        <ecNumber evidence="1">2.1.2.11</ecNumber>
    </recommendedName>
    <alternativeName>
        <fullName evidence="1">Ketopantoate hydroxymethyltransferase</fullName>
        <shortName evidence="1">KPHMT</shortName>
    </alternativeName>
</protein>
<sequence length="265" mass="28667">MKTTTMSQLRQWKQEKRKFATLTAYDASFAQLFAEQGIQVLLVGDSLGMTLQGFDSTLPVTVADVAYHTRAVRRGAPHCLLLADMPFMSYATPELAFTHAAELMRAGANMVKLEGGSWLCDTIRMLAERAVPVCGHLGLTPQSVNIFGGYKVQGREEVAANQLLQDAIALEQAGAQLLVLECVPVELAQRVTEELTIPVIGIGAGNVTDGQILVMHDALGITGGHTPKFSKNFLAHSAGDIRAAIKLYIEEVEGGIYPAEEHTFQ</sequence>